<protein>
    <recommendedName>
        <fullName>PDZ domain-containing protein MAGIX</fullName>
    </recommendedName>
</protein>
<sequence length="324" mass="34771">MDSRAGNTADPRGGRRGGGLQGSRSPRARQLLERLDARPLAARAAADLTALVRKAGATLRLRHTEGVSGLDSADIEVTDSRLPHATLVKHRPQHQRSETLGTWTEPLPVTQNKASYALKVPQATGRFSVELTRGPAGFGLTLSGGRNVSGDAPLTVHGLLKDGPAQRCGRLQAGDLVLYINGQSTQGLTHAQVVERIRTGGPHLCLVLQRPQDMDGSRIKEVGGHRKTDRSLDPRGSRVESRSTISPVHHRPKTRTSPRPSPEAVAIGHVVRAVEHPTEDLENRIPGTPGPWLVPSEDRLSRALGVRGGGAQLALEMAAGRRRH</sequence>
<organism>
    <name type="scientific">Mus musculus</name>
    <name type="common">Mouse</name>
    <dbReference type="NCBI Taxonomy" id="10090"/>
    <lineage>
        <taxon>Eukaryota</taxon>
        <taxon>Metazoa</taxon>
        <taxon>Chordata</taxon>
        <taxon>Craniata</taxon>
        <taxon>Vertebrata</taxon>
        <taxon>Euteleostomi</taxon>
        <taxon>Mammalia</taxon>
        <taxon>Eutheria</taxon>
        <taxon>Euarchontoglires</taxon>
        <taxon>Glires</taxon>
        <taxon>Rodentia</taxon>
        <taxon>Myomorpha</taxon>
        <taxon>Muroidea</taxon>
        <taxon>Muridae</taxon>
        <taxon>Murinae</taxon>
        <taxon>Mus</taxon>
        <taxon>Mus</taxon>
    </lineage>
</organism>
<evidence type="ECO:0000255" key="1">
    <source>
        <dbReference type="PROSITE-ProRule" id="PRU00143"/>
    </source>
</evidence>
<evidence type="ECO:0000256" key="2">
    <source>
        <dbReference type="SAM" id="MobiDB-lite"/>
    </source>
</evidence>
<evidence type="ECO:0000305" key="3"/>
<evidence type="ECO:0007744" key="4">
    <source>
    </source>
</evidence>
<evidence type="ECO:0007744" key="5">
    <source>
    </source>
</evidence>
<dbReference type="EMBL" id="AF229645">
    <property type="protein sequence ID" value="AAF66955.1"/>
    <property type="molecule type" value="mRNA"/>
</dbReference>
<dbReference type="EMBL" id="AL672231">
    <property type="status" value="NOT_ANNOTATED_CDS"/>
    <property type="molecule type" value="Genomic_DNA"/>
</dbReference>
<dbReference type="EMBL" id="BC099459">
    <property type="protein sequence ID" value="AAH99459.1"/>
    <property type="molecule type" value="mRNA"/>
</dbReference>
<dbReference type="EMBL" id="BC132580">
    <property type="protein sequence ID" value="AAI32581.1"/>
    <property type="molecule type" value="mRNA"/>
</dbReference>
<dbReference type="EMBL" id="BC132582">
    <property type="protein sequence ID" value="AAI32583.1"/>
    <property type="molecule type" value="mRNA"/>
</dbReference>
<dbReference type="CCDS" id="CCDS29968.1"/>
<dbReference type="RefSeq" id="NP_061302.2">
    <property type="nucleotide sequence ID" value="NM_018832.2"/>
</dbReference>
<dbReference type="FunCoup" id="Q4KL35">
    <property type="interactions" value="33"/>
</dbReference>
<dbReference type="STRING" id="10090.ENSMUSP00000111359"/>
<dbReference type="iPTMnet" id="Q4KL35"/>
<dbReference type="PhosphoSitePlus" id="Q4KL35"/>
<dbReference type="PaxDb" id="10090-ENSMUSP00000111359"/>
<dbReference type="ProteomicsDB" id="292002"/>
<dbReference type="Antibodypedia" id="72948">
    <property type="antibodies" value="65 antibodies from 16 providers"/>
</dbReference>
<dbReference type="DNASU" id="54634"/>
<dbReference type="Ensembl" id="ENSMUST00000115695.4">
    <property type="protein sequence ID" value="ENSMUSP00000111359.4"/>
    <property type="gene ID" value="ENSMUSG00000031147.9"/>
</dbReference>
<dbReference type="GeneID" id="54634"/>
<dbReference type="KEGG" id="mmu:54634"/>
<dbReference type="UCSC" id="uc009sly.1">
    <property type="organism name" value="mouse"/>
</dbReference>
<dbReference type="AGR" id="MGI:1859644"/>
<dbReference type="CTD" id="79917"/>
<dbReference type="MGI" id="MGI:1859644">
    <property type="gene designation" value="Magix"/>
</dbReference>
<dbReference type="VEuPathDB" id="HostDB:ENSMUSG00000031147"/>
<dbReference type="eggNOG" id="KOG3209">
    <property type="taxonomic scope" value="Eukaryota"/>
</dbReference>
<dbReference type="GeneTree" id="ENSGT00940000162529"/>
<dbReference type="HOGENOM" id="CLU_076904_0_0_1"/>
<dbReference type="InParanoid" id="Q4KL35"/>
<dbReference type="OMA" id="VEHQPQH"/>
<dbReference type="OrthoDB" id="84340at9989"/>
<dbReference type="PhylomeDB" id="Q4KL35"/>
<dbReference type="TreeFam" id="TF315536"/>
<dbReference type="BioGRID-ORCS" id="54634">
    <property type="hits" value="1 hit in 77 CRISPR screens"/>
</dbReference>
<dbReference type="ChiTaRS" id="Magix">
    <property type="organism name" value="mouse"/>
</dbReference>
<dbReference type="PRO" id="PR:Q4KL35"/>
<dbReference type="Proteomes" id="UP000000589">
    <property type="component" value="Chromosome X"/>
</dbReference>
<dbReference type="RNAct" id="Q4KL35">
    <property type="molecule type" value="protein"/>
</dbReference>
<dbReference type="Bgee" id="ENSMUSG00000031147">
    <property type="expression patterns" value="Expressed in hindlimb stylopod muscle and 56 other cell types or tissues"/>
</dbReference>
<dbReference type="CDD" id="cd06735">
    <property type="entry name" value="PDZ5_MAGI-1_3-like"/>
    <property type="match status" value="1"/>
</dbReference>
<dbReference type="Gene3D" id="2.30.42.10">
    <property type="match status" value="1"/>
</dbReference>
<dbReference type="InterPro" id="IPR030031">
    <property type="entry name" value="MAGIX"/>
</dbReference>
<dbReference type="InterPro" id="IPR001478">
    <property type="entry name" value="PDZ"/>
</dbReference>
<dbReference type="InterPro" id="IPR036034">
    <property type="entry name" value="PDZ_sf"/>
</dbReference>
<dbReference type="PANTHER" id="PTHR47646">
    <property type="entry name" value="PDZ DOMAIN-CONTAINING PROTEIN MAGIX"/>
    <property type="match status" value="1"/>
</dbReference>
<dbReference type="PANTHER" id="PTHR47646:SF1">
    <property type="entry name" value="PDZ DOMAIN-CONTAINING PROTEIN MAGIX"/>
    <property type="match status" value="1"/>
</dbReference>
<dbReference type="Pfam" id="PF00595">
    <property type="entry name" value="PDZ"/>
    <property type="match status" value="1"/>
</dbReference>
<dbReference type="SMART" id="SM00228">
    <property type="entry name" value="PDZ"/>
    <property type="match status" value="1"/>
</dbReference>
<dbReference type="SUPFAM" id="SSF50156">
    <property type="entry name" value="PDZ domain-like"/>
    <property type="match status" value="1"/>
</dbReference>
<dbReference type="PROSITE" id="PS50106">
    <property type="entry name" value="PDZ"/>
    <property type="match status" value="1"/>
</dbReference>
<reference key="1">
    <citation type="journal article" date="2000" name="Genomics">
        <title>A transcript map of a 2-Mb BAC contig in the proximal portion of the mouse X chromosome and regional mapping of the scurfy mutation.</title>
        <authorList>
            <person name="Means G.D."/>
            <person name="Toy D.Y."/>
            <person name="Baum P.R."/>
            <person name="Derry J.M.J."/>
        </authorList>
    </citation>
    <scope>NUCLEOTIDE SEQUENCE [MRNA]</scope>
</reference>
<reference key="2">
    <citation type="journal article" date="2009" name="PLoS Biol.">
        <title>Lineage-specific biology revealed by a finished genome assembly of the mouse.</title>
        <authorList>
            <person name="Church D.M."/>
            <person name="Goodstadt L."/>
            <person name="Hillier L.W."/>
            <person name="Zody M.C."/>
            <person name="Goldstein S."/>
            <person name="She X."/>
            <person name="Bult C.J."/>
            <person name="Agarwala R."/>
            <person name="Cherry J.L."/>
            <person name="DiCuccio M."/>
            <person name="Hlavina W."/>
            <person name="Kapustin Y."/>
            <person name="Meric P."/>
            <person name="Maglott D."/>
            <person name="Birtle Z."/>
            <person name="Marques A.C."/>
            <person name="Graves T."/>
            <person name="Zhou S."/>
            <person name="Teague B."/>
            <person name="Potamousis K."/>
            <person name="Churas C."/>
            <person name="Place M."/>
            <person name="Herschleb J."/>
            <person name="Runnheim R."/>
            <person name="Forrest D."/>
            <person name="Amos-Landgraf J."/>
            <person name="Schwartz D.C."/>
            <person name="Cheng Z."/>
            <person name="Lindblad-Toh K."/>
            <person name="Eichler E.E."/>
            <person name="Ponting C.P."/>
        </authorList>
    </citation>
    <scope>NUCLEOTIDE SEQUENCE [LARGE SCALE GENOMIC DNA]</scope>
    <source>
        <strain>C57BL/6J</strain>
    </source>
</reference>
<reference key="3">
    <citation type="journal article" date="2004" name="Genome Res.">
        <title>The status, quality, and expansion of the NIH full-length cDNA project: the Mammalian Gene Collection (MGC).</title>
        <authorList>
            <consortium name="The MGC Project Team"/>
        </authorList>
    </citation>
    <scope>NUCLEOTIDE SEQUENCE [LARGE SCALE MRNA]</scope>
    <source>
        <tissue>Brain</tissue>
        <tissue>Thyroid</tissue>
    </source>
</reference>
<reference key="4">
    <citation type="journal article" date="2007" name="Proc. Natl. Acad. Sci. U.S.A.">
        <title>Large-scale phosphorylation analysis of mouse liver.</title>
        <authorList>
            <person name="Villen J."/>
            <person name="Beausoleil S.A."/>
            <person name="Gerber S.A."/>
            <person name="Gygi S.P."/>
        </authorList>
    </citation>
    <scope>PHOSPHORYLATION [LARGE SCALE ANALYSIS] AT SER-261</scope>
    <scope>IDENTIFICATION BY MASS SPECTROMETRY [LARGE SCALE ANALYSIS]</scope>
    <source>
        <tissue>Liver</tissue>
    </source>
</reference>
<reference key="5">
    <citation type="journal article" date="2010" name="Cell">
        <title>A tissue-specific atlas of mouse protein phosphorylation and expression.</title>
        <authorList>
            <person name="Huttlin E.L."/>
            <person name="Jedrychowski M.P."/>
            <person name="Elias J.E."/>
            <person name="Goswami T."/>
            <person name="Rad R."/>
            <person name="Beausoleil S.A."/>
            <person name="Villen J."/>
            <person name="Haas W."/>
            <person name="Sowa M.E."/>
            <person name="Gygi S.P."/>
        </authorList>
    </citation>
    <scope>PHOSPHORYLATION [LARGE SCALE ANALYSIS] AT SER-261</scope>
    <scope>IDENTIFICATION BY MASS SPECTROMETRY [LARGE SCALE ANALYSIS]</scope>
    <source>
        <tissue>Kidney</tissue>
    </source>
</reference>
<gene>
    <name type="primary">Magix</name>
    <name type="synonym">Pdzx</name>
</gene>
<proteinExistence type="evidence at protein level"/>
<keyword id="KW-0597">Phosphoprotein</keyword>
<keyword id="KW-1185">Reference proteome</keyword>
<name>MAGIX_MOUSE</name>
<feature type="chain" id="PRO_0000310543" description="PDZ domain-containing protein MAGIX">
    <location>
        <begin position="1"/>
        <end position="324"/>
    </location>
</feature>
<feature type="domain" description="PDZ" evidence="1">
    <location>
        <begin position="128"/>
        <end position="212"/>
    </location>
</feature>
<feature type="region of interest" description="Disordered" evidence="2">
    <location>
        <begin position="1"/>
        <end position="26"/>
    </location>
</feature>
<feature type="region of interest" description="Disordered" evidence="2">
    <location>
        <begin position="216"/>
        <end position="263"/>
    </location>
</feature>
<feature type="compositionally biased region" description="Basic and acidic residues" evidence="2">
    <location>
        <begin position="216"/>
        <end position="241"/>
    </location>
</feature>
<feature type="modified residue" description="Phosphoserine" evidence="4 5">
    <location>
        <position position="261"/>
    </location>
</feature>
<feature type="sequence conflict" description="In Ref. 1; AAF66955." evidence="3" ref="1">
    <original>K</original>
    <variation>M</variation>
    <location>
        <position position="113"/>
    </location>
</feature>
<accession>Q4KL35</accession>
<accession>Q9JIG3</accession>